<protein>
    <recommendedName>
        <fullName>Lymphocyte antigen 86</fullName>
        <shortName>Ly-86</shortName>
    </recommendedName>
    <alternativeName>
        <fullName>Protein MD-1</fullName>
    </alternativeName>
</protein>
<keyword id="KW-0002">3D-structure</keyword>
<keyword id="KW-0903">Direct protein sequencing</keyword>
<keyword id="KW-1015">Disulfide bond</keyword>
<keyword id="KW-0325">Glycoprotein</keyword>
<keyword id="KW-0391">Immunity</keyword>
<keyword id="KW-0395">Inflammatory response</keyword>
<keyword id="KW-0399">Innate immunity</keyword>
<keyword id="KW-1267">Proteomics identification</keyword>
<keyword id="KW-1185">Reference proteome</keyword>
<keyword id="KW-0964">Secreted</keyword>
<keyword id="KW-0732">Signal</keyword>
<accession>O95711</accession>
<accession>Q9UQC4</accession>
<gene>
    <name type="primary">LY86</name>
    <name type="synonym">MD1</name>
</gene>
<reference key="1">
    <citation type="journal article" date="1998" name="Blood">
        <title>RP105 is associated with MD-1 and transmits an activation signal in human B cells.</title>
        <authorList>
            <person name="Miura Y."/>
            <person name="Shimazu R."/>
            <person name="Miyake K."/>
            <person name="Akashi S."/>
            <person name="Ogata H."/>
            <person name="Yamashita Y."/>
            <person name="Narisawa Y."/>
            <person name="Kimoto M."/>
        </authorList>
    </citation>
    <scope>NUCLEOTIDE SEQUENCE [MRNA]</scope>
    <source>
        <tissue>Fetal liver</tissue>
        <tissue>Spleen</tissue>
    </source>
</reference>
<reference key="2">
    <citation type="journal article" date="1999" name="Biochem. Biophys. Res. Commun.">
        <title>Human MD-1 homologue is a BCG-regulated gene product in monocytes: Its identification by differential display.</title>
        <authorList>
            <person name="Begum N.A."/>
            <person name="Tsuji S."/>
            <person name="Nomura M."/>
            <person name="Shida K."/>
            <person name="Azuma I."/>
            <person name="Hayashi A."/>
            <person name="Matsumoto M."/>
            <person name="Seya T."/>
            <person name="Toyoshima K."/>
        </authorList>
    </citation>
    <scope>NUCLEOTIDE SEQUENCE [MRNA] OF 45-162</scope>
    <source>
        <tissue>Monocyte</tissue>
    </source>
</reference>
<reference key="3">
    <citation type="journal article" date="2003" name="Nature">
        <title>The DNA sequence and analysis of human chromosome 6.</title>
        <authorList>
            <person name="Mungall A.J."/>
            <person name="Palmer S.A."/>
            <person name="Sims S.K."/>
            <person name="Edwards C.A."/>
            <person name="Ashurst J.L."/>
            <person name="Wilming L."/>
            <person name="Jones M.C."/>
            <person name="Horton R."/>
            <person name="Hunt S.E."/>
            <person name="Scott C.E."/>
            <person name="Gilbert J.G.R."/>
            <person name="Clamp M.E."/>
            <person name="Bethel G."/>
            <person name="Milne S."/>
            <person name="Ainscough R."/>
            <person name="Almeida J.P."/>
            <person name="Ambrose K.D."/>
            <person name="Andrews T.D."/>
            <person name="Ashwell R.I.S."/>
            <person name="Babbage A.K."/>
            <person name="Bagguley C.L."/>
            <person name="Bailey J."/>
            <person name="Banerjee R."/>
            <person name="Barker D.J."/>
            <person name="Barlow K.F."/>
            <person name="Bates K."/>
            <person name="Beare D.M."/>
            <person name="Beasley H."/>
            <person name="Beasley O."/>
            <person name="Bird C.P."/>
            <person name="Blakey S.E."/>
            <person name="Bray-Allen S."/>
            <person name="Brook J."/>
            <person name="Brown A.J."/>
            <person name="Brown J.Y."/>
            <person name="Burford D.C."/>
            <person name="Burrill W."/>
            <person name="Burton J."/>
            <person name="Carder C."/>
            <person name="Carter N.P."/>
            <person name="Chapman J.C."/>
            <person name="Clark S.Y."/>
            <person name="Clark G."/>
            <person name="Clee C.M."/>
            <person name="Clegg S."/>
            <person name="Cobley V."/>
            <person name="Collier R.E."/>
            <person name="Collins J.E."/>
            <person name="Colman L.K."/>
            <person name="Corby N.R."/>
            <person name="Coville G.J."/>
            <person name="Culley K.M."/>
            <person name="Dhami P."/>
            <person name="Davies J."/>
            <person name="Dunn M."/>
            <person name="Earthrowl M.E."/>
            <person name="Ellington A.E."/>
            <person name="Evans K.A."/>
            <person name="Faulkner L."/>
            <person name="Francis M.D."/>
            <person name="Frankish A."/>
            <person name="Frankland J."/>
            <person name="French L."/>
            <person name="Garner P."/>
            <person name="Garnett J."/>
            <person name="Ghori M.J."/>
            <person name="Gilby L.M."/>
            <person name="Gillson C.J."/>
            <person name="Glithero R.J."/>
            <person name="Grafham D.V."/>
            <person name="Grant M."/>
            <person name="Gribble S."/>
            <person name="Griffiths C."/>
            <person name="Griffiths M.N.D."/>
            <person name="Hall R."/>
            <person name="Halls K.S."/>
            <person name="Hammond S."/>
            <person name="Harley J.L."/>
            <person name="Hart E.A."/>
            <person name="Heath P.D."/>
            <person name="Heathcott R."/>
            <person name="Holmes S.J."/>
            <person name="Howden P.J."/>
            <person name="Howe K.L."/>
            <person name="Howell G.R."/>
            <person name="Huckle E."/>
            <person name="Humphray S.J."/>
            <person name="Humphries M.D."/>
            <person name="Hunt A.R."/>
            <person name="Johnson C.M."/>
            <person name="Joy A.A."/>
            <person name="Kay M."/>
            <person name="Keenan S.J."/>
            <person name="Kimberley A.M."/>
            <person name="King A."/>
            <person name="Laird G.K."/>
            <person name="Langford C."/>
            <person name="Lawlor S."/>
            <person name="Leongamornlert D.A."/>
            <person name="Leversha M."/>
            <person name="Lloyd C.R."/>
            <person name="Lloyd D.M."/>
            <person name="Loveland J.E."/>
            <person name="Lovell J."/>
            <person name="Martin S."/>
            <person name="Mashreghi-Mohammadi M."/>
            <person name="Maslen G.L."/>
            <person name="Matthews L."/>
            <person name="McCann O.T."/>
            <person name="McLaren S.J."/>
            <person name="McLay K."/>
            <person name="McMurray A."/>
            <person name="Moore M.J.F."/>
            <person name="Mullikin J.C."/>
            <person name="Niblett D."/>
            <person name="Nickerson T."/>
            <person name="Novik K.L."/>
            <person name="Oliver K."/>
            <person name="Overton-Larty E.K."/>
            <person name="Parker A."/>
            <person name="Patel R."/>
            <person name="Pearce A.V."/>
            <person name="Peck A.I."/>
            <person name="Phillimore B.J.C.T."/>
            <person name="Phillips S."/>
            <person name="Plumb R.W."/>
            <person name="Porter K.M."/>
            <person name="Ramsey Y."/>
            <person name="Ranby S.A."/>
            <person name="Rice C.M."/>
            <person name="Ross M.T."/>
            <person name="Searle S.M."/>
            <person name="Sehra H.K."/>
            <person name="Sheridan E."/>
            <person name="Skuce C.D."/>
            <person name="Smith S."/>
            <person name="Smith M."/>
            <person name="Spraggon L."/>
            <person name="Squares S.L."/>
            <person name="Steward C.A."/>
            <person name="Sycamore N."/>
            <person name="Tamlyn-Hall G."/>
            <person name="Tester J."/>
            <person name="Theaker A.J."/>
            <person name="Thomas D.W."/>
            <person name="Thorpe A."/>
            <person name="Tracey A."/>
            <person name="Tromans A."/>
            <person name="Tubby B."/>
            <person name="Wall M."/>
            <person name="Wallis J.M."/>
            <person name="West A.P."/>
            <person name="White S.S."/>
            <person name="Whitehead S.L."/>
            <person name="Whittaker H."/>
            <person name="Wild A."/>
            <person name="Willey D.J."/>
            <person name="Wilmer T.E."/>
            <person name="Wood J.M."/>
            <person name="Wray P.W."/>
            <person name="Wyatt J.C."/>
            <person name="Young L."/>
            <person name="Younger R.M."/>
            <person name="Bentley D.R."/>
            <person name="Coulson A."/>
            <person name="Durbin R.M."/>
            <person name="Hubbard T."/>
            <person name="Sulston J.E."/>
            <person name="Dunham I."/>
            <person name="Rogers J."/>
            <person name="Beck S."/>
        </authorList>
    </citation>
    <scope>NUCLEOTIDE SEQUENCE [LARGE SCALE GENOMIC DNA]</scope>
</reference>
<reference key="4">
    <citation type="journal article" date="2004" name="Genome Res.">
        <title>The status, quality, and expansion of the NIH full-length cDNA project: the Mammalian Gene Collection (MGC).</title>
        <authorList>
            <consortium name="The MGC Project Team"/>
        </authorList>
    </citation>
    <scope>NUCLEOTIDE SEQUENCE [LARGE SCALE MRNA]</scope>
    <source>
        <tissue>Testis</tissue>
    </source>
</reference>
<reference key="5">
    <citation type="journal article" date="2004" name="Protein Sci.">
        <title>Signal peptide prediction based on analysis of experimentally verified cleavage sites.</title>
        <authorList>
            <person name="Zhang Z."/>
            <person name="Henzel W.J."/>
        </authorList>
    </citation>
    <scope>PROTEIN SEQUENCE OF 21-35</scope>
</reference>
<reference key="6">
    <citation type="journal article" date="2011" name="J. Mol. Biol.">
        <title>Crystal structures of mouse and human RP105/MD-1 complexes reveal unique dimer organization of the toll-like receptor family.</title>
        <authorList>
            <person name="Ohto U."/>
            <person name="Miyake K."/>
            <person name="Shimizu T."/>
        </authorList>
    </citation>
    <scope>X-RAY CRYSTALLOGRAPHY (2.8 ANGSTROMS) OF 21-162 IN COMPLEX WITH CD180</scope>
    <scope>SUBUNIT</scope>
    <scope>DISULFIDE BONDS</scope>
</reference>
<feature type="signal peptide" evidence="3">
    <location>
        <begin position="1"/>
        <end position="20"/>
    </location>
</feature>
<feature type="chain" id="PRO_0000018614" description="Lymphocyte antigen 86">
    <location>
        <begin position="21"/>
        <end position="162"/>
    </location>
</feature>
<feature type="glycosylation site" description="N-linked (GlcNAc...) asparagine" evidence="2">
    <location>
        <position position="96"/>
    </location>
</feature>
<feature type="glycosylation site" description="N-linked (GlcNAc...) asparagine" evidence="2">
    <location>
        <position position="156"/>
    </location>
</feature>
<feature type="disulfide bond" evidence="4">
    <location>
        <begin position="33"/>
        <end position="58"/>
    </location>
</feature>
<feature type="disulfide bond" evidence="4">
    <location>
        <begin position="45"/>
        <end position="154"/>
    </location>
</feature>
<feature type="disulfide bond" evidence="4">
    <location>
        <begin position="102"/>
        <end position="112"/>
    </location>
</feature>
<feature type="sequence variant" id="VAR_024531" description="In dbSNP:rs5743649.">
    <original>S</original>
    <variation>P</variation>
    <location>
        <position position="93"/>
    </location>
</feature>
<feature type="sequence variant" id="VAR_050029" description="In dbSNP:rs5743651.">
    <original>Y</original>
    <variation>C</variation>
    <location>
        <position position="121"/>
    </location>
</feature>
<feature type="sequence variant" id="VAR_014539" description="In dbSNP:rs1802323.">
    <original>M</original>
    <variation>V</variation>
    <location>
        <position position="160"/>
    </location>
</feature>
<feature type="strand" evidence="6">
    <location>
        <begin position="30"/>
        <end position="33"/>
    </location>
</feature>
<feature type="strand" evidence="6">
    <location>
        <begin position="35"/>
        <end position="37"/>
    </location>
</feature>
<feature type="strand" evidence="6">
    <location>
        <begin position="39"/>
        <end position="44"/>
    </location>
</feature>
<feature type="strand" evidence="6">
    <location>
        <begin position="52"/>
        <end position="57"/>
    </location>
</feature>
<feature type="strand" evidence="6">
    <location>
        <begin position="67"/>
        <end position="73"/>
    </location>
</feature>
<feature type="strand" evidence="6">
    <location>
        <begin position="79"/>
        <end position="89"/>
    </location>
</feature>
<feature type="strand" evidence="6">
    <location>
        <begin position="92"/>
        <end position="102"/>
    </location>
</feature>
<feature type="turn" evidence="6">
    <location>
        <begin position="110"/>
        <end position="113"/>
    </location>
</feature>
<feature type="strand" evidence="6">
    <location>
        <begin position="119"/>
        <end position="125"/>
    </location>
</feature>
<feature type="strand" evidence="6">
    <location>
        <begin position="135"/>
        <end position="145"/>
    </location>
</feature>
<feature type="strand" evidence="6">
    <location>
        <begin position="151"/>
        <end position="161"/>
    </location>
</feature>
<evidence type="ECO:0000250" key="1"/>
<evidence type="ECO:0000255" key="2"/>
<evidence type="ECO:0000269" key="3">
    <source>
    </source>
</evidence>
<evidence type="ECO:0000269" key="4">
    <source>
    </source>
</evidence>
<evidence type="ECO:0000305" key="5"/>
<evidence type="ECO:0007829" key="6">
    <source>
        <dbReference type="PDB" id="3B2D"/>
    </source>
</evidence>
<sequence length="162" mass="17906">MKGFTATLFLWTLIFPSCSGGGGGKAWPTHVVCSDSGLEVLYQSCDPLQDFGFSVEKCSKQLKSNINIRFGIILREDIKELFLDLALMSQGSSVLNFSYPICEAALPKFSFCGRRKGEQIYYAGPVNNPEFTIPQGEYQVLLELYTEKRSTVACANATIMCS</sequence>
<name>LY86_HUMAN</name>
<comment type="function">
    <text evidence="1">May cooperate with CD180 and TLR4 to mediate the innate immune response to bacterial lipopolysaccharide (LPS) and cytokine production. Important for efficient CD180 cell surface expression (By similarity).</text>
</comment>
<comment type="subunit">
    <text evidence="4">M-shaped tetramer of two CD180-LY86 heterodimers.</text>
</comment>
<comment type="interaction">
    <interactant intactId="EBI-12203791">
        <id>O95711</id>
    </interactant>
    <interactant intactId="EBI-15940363">
        <id>Q99467</id>
        <label>CD180</label>
    </interactant>
    <organismsDiffer>false</organismsDiffer>
    <experiments>3</experiments>
</comment>
<comment type="interaction">
    <interactant intactId="EBI-12203791">
        <id>O95711</id>
    </interactant>
    <interactant intactId="EBI-356700">
        <id>P57678</id>
        <label>GEMIN4</label>
    </interactant>
    <organismsDiffer>false</organismsDiffer>
    <experiments>3</experiments>
</comment>
<comment type="subcellular location">
    <subcellularLocation>
        <location>Secreted</location>
        <location>Extracellular space</location>
    </subcellularLocation>
    <text>Associated with CD180 at the cell surface.</text>
</comment>
<comment type="tissue specificity">
    <text>Highly expressed in B-cells, monocytes and tonsil.</text>
</comment>
<comment type="induction">
    <text>In monocytes, down-regulated by the cell-wall fraction of Mycobacterium bovis (BCG-CWS).</text>
</comment>
<comment type="sequence caution" evidence="5">
    <conflict type="erroneous initiation">
        <sequence resource="EMBL-CDS" id="BAA76410"/>
    </conflict>
</comment>
<proteinExistence type="evidence at protein level"/>
<organism>
    <name type="scientific">Homo sapiens</name>
    <name type="common">Human</name>
    <dbReference type="NCBI Taxonomy" id="9606"/>
    <lineage>
        <taxon>Eukaryota</taxon>
        <taxon>Metazoa</taxon>
        <taxon>Chordata</taxon>
        <taxon>Craniata</taxon>
        <taxon>Vertebrata</taxon>
        <taxon>Euteleostomi</taxon>
        <taxon>Mammalia</taxon>
        <taxon>Eutheria</taxon>
        <taxon>Euarchontoglires</taxon>
        <taxon>Primates</taxon>
        <taxon>Haplorrhini</taxon>
        <taxon>Catarrhini</taxon>
        <taxon>Hominidae</taxon>
        <taxon>Homo</taxon>
    </lineage>
</organism>
<dbReference type="EMBL" id="AF057178">
    <property type="protein sequence ID" value="AAC98152.2"/>
    <property type="molecule type" value="mRNA"/>
</dbReference>
<dbReference type="EMBL" id="AB020499">
    <property type="protein sequence ID" value="BAA76410.1"/>
    <property type="status" value="ALT_INIT"/>
    <property type="molecule type" value="mRNA"/>
</dbReference>
<dbReference type="EMBL" id="AL031123">
    <property type="status" value="NOT_ANNOTATED_CDS"/>
    <property type="molecule type" value="Genomic_DNA"/>
</dbReference>
<dbReference type="EMBL" id="BC038846">
    <property type="protein sequence ID" value="AAH38846.1"/>
    <property type="molecule type" value="mRNA"/>
</dbReference>
<dbReference type="CCDS" id="CCDS4498.1"/>
<dbReference type="RefSeq" id="NP_004262.1">
    <property type="nucleotide sequence ID" value="NM_004271.4"/>
</dbReference>
<dbReference type="PDB" id="3B2D">
    <property type="method" value="X-ray"/>
    <property type="resolution" value="2.80 A"/>
    <property type="chains" value="C/D=21-162"/>
</dbReference>
<dbReference type="PDBsum" id="3B2D"/>
<dbReference type="SMR" id="O95711"/>
<dbReference type="BioGRID" id="114839">
    <property type="interactions" value="245"/>
</dbReference>
<dbReference type="CORUM" id="O95711"/>
<dbReference type="DIP" id="DIP-59105N"/>
<dbReference type="FunCoup" id="O95711">
    <property type="interactions" value="93"/>
</dbReference>
<dbReference type="IntAct" id="O95711">
    <property type="interactions" value="217"/>
</dbReference>
<dbReference type="STRING" id="9606.ENSP00000369286"/>
<dbReference type="GlyConnect" id="1473">
    <property type="glycosylation" value="1 N-Linked glycan (1 site)"/>
</dbReference>
<dbReference type="GlyCosmos" id="O95711">
    <property type="glycosylation" value="2 sites, 1 glycan"/>
</dbReference>
<dbReference type="GlyGen" id="O95711">
    <property type="glycosylation" value="2 sites, 2 N-linked glycans (1 site)"/>
</dbReference>
<dbReference type="iPTMnet" id="O95711"/>
<dbReference type="PhosphoSitePlus" id="O95711"/>
<dbReference type="BioMuta" id="LY86"/>
<dbReference type="MassIVE" id="O95711"/>
<dbReference type="PaxDb" id="9606-ENSP00000369286"/>
<dbReference type="PeptideAtlas" id="O95711"/>
<dbReference type="ProteomicsDB" id="51007"/>
<dbReference type="Antibodypedia" id="9679">
    <property type="antibodies" value="393 antibodies from 32 providers"/>
</dbReference>
<dbReference type="DNASU" id="9450"/>
<dbReference type="Ensembl" id="ENST00000230568.5">
    <property type="protein sequence ID" value="ENSP00000230568.3"/>
    <property type="gene ID" value="ENSG00000112799.9"/>
</dbReference>
<dbReference type="Ensembl" id="ENST00000379953.6">
    <property type="protein sequence ID" value="ENSP00000369286.1"/>
    <property type="gene ID" value="ENSG00000112799.9"/>
</dbReference>
<dbReference type="GeneID" id="9450"/>
<dbReference type="KEGG" id="hsa:9450"/>
<dbReference type="MANE-Select" id="ENST00000230568.5">
    <property type="protein sequence ID" value="ENSP00000230568.3"/>
    <property type="RefSeq nucleotide sequence ID" value="NM_004271.4"/>
    <property type="RefSeq protein sequence ID" value="NP_004262.1"/>
</dbReference>
<dbReference type="UCSC" id="uc003mwy.2">
    <property type="organism name" value="human"/>
</dbReference>
<dbReference type="AGR" id="HGNC:16837"/>
<dbReference type="CTD" id="9450"/>
<dbReference type="DisGeNET" id="9450"/>
<dbReference type="GeneCards" id="LY86"/>
<dbReference type="HGNC" id="HGNC:16837">
    <property type="gene designation" value="LY86"/>
</dbReference>
<dbReference type="HPA" id="ENSG00000112799">
    <property type="expression patterns" value="Tissue enhanced (lymphoid)"/>
</dbReference>
<dbReference type="MIM" id="605241">
    <property type="type" value="gene"/>
</dbReference>
<dbReference type="neXtProt" id="NX_O95711"/>
<dbReference type="OpenTargets" id="ENSG00000112799"/>
<dbReference type="PharmGKB" id="PA128394549"/>
<dbReference type="VEuPathDB" id="HostDB:ENSG00000112799"/>
<dbReference type="eggNOG" id="ENOG502S63U">
    <property type="taxonomic scope" value="Eukaryota"/>
</dbReference>
<dbReference type="GeneTree" id="ENSGT00390000018605"/>
<dbReference type="HOGENOM" id="CLU_145135_0_0_1"/>
<dbReference type="InParanoid" id="O95711"/>
<dbReference type="OMA" id="NYSYPIC"/>
<dbReference type="OrthoDB" id="9889383at2759"/>
<dbReference type="PAN-GO" id="O95711">
    <property type="GO annotations" value="2 GO annotations based on evolutionary models"/>
</dbReference>
<dbReference type="PhylomeDB" id="O95711"/>
<dbReference type="TreeFam" id="TF335876"/>
<dbReference type="PathwayCommons" id="O95711"/>
<dbReference type="Reactome" id="R-HSA-166016">
    <property type="pathway name" value="Toll Like Receptor 4 (TLR4) Cascade"/>
</dbReference>
<dbReference type="SignaLink" id="O95711"/>
<dbReference type="BioGRID-ORCS" id="9450">
    <property type="hits" value="11 hits in 1143 CRISPR screens"/>
</dbReference>
<dbReference type="ChiTaRS" id="LY86">
    <property type="organism name" value="human"/>
</dbReference>
<dbReference type="EvolutionaryTrace" id="O95711"/>
<dbReference type="GenomeRNAi" id="9450"/>
<dbReference type="Pharos" id="O95711">
    <property type="development level" value="Tbio"/>
</dbReference>
<dbReference type="PRO" id="PR:O95711"/>
<dbReference type="Proteomes" id="UP000005640">
    <property type="component" value="Chromosome 6"/>
</dbReference>
<dbReference type="RNAct" id="O95711">
    <property type="molecule type" value="protein"/>
</dbReference>
<dbReference type="Bgee" id="ENSG00000112799">
    <property type="expression patterns" value="Expressed in monocyte and 158 other cell types or tissues"/>
</dbReference>
<dbReference type="GO" id="GO:0005576">
    <property type="term" value="C:extracellular region"/>
    <property type="evidence" value="ECO:0007669"/>
    <property type="project" value="UniProtKB-SubCell"/>
</dbReference>
<dbReference type="GO" id="GO:0006954">
    <property type="term" value="P:inflammatory response"/>
    <property type="evidence" value="ECO:0007669"/>
    <property type="project" value="UniProtKB-KW"/>
</dbReference>
<dbReference type="GO" id="GO:0045087">
    <property type="term" value="P:innate immune response"/>
    <property type="evidence" value="ECO:0000318"/>
    <property type="project" value="GO_Central"/>
</dbReference>
<dbReference type="GO" id="GO:0031663">
    <property type="term" value="P:lipopolysaccharide-mediated signaling pathway"/>
    <property type="evidence" value="ECO:0007669"/>
    <property type="project" value="Ensembl"/>
</dbReference>
<dbReference type="GO" id="GO:0031666">
    <property type="term" value="P:positive regulation of lipopolysaccharide-mediated signaling pathway"/>
    <property type="evidence" value="ECO:0000316"/>
    <property type="project" value="MGI"/>
</dbReference>
<dbReference type="CDD" id="cd00915">
    <property type="entry name" value="MD-1_MD-2"/>
    <property type="match status" value="1"/>
</dbReference>
<dbReference type="FunFam" id="2.60.40.770:FF:000005">
    <property type="entry name" value="Lymphocyte antigen 86"/>
    <property type="match status" value="1"/>
</dbReference>
<dbReference type="Gene3D" id="2.60.40.770">
    <property type="match status" value="1"/>
</dbReference>
<dbReference type="InterPro" id="IPR014756">
    <property type="entry name" value="Ig_E-set"/>
</dbReference>
<dbReference type="InterPro" id="IPR039945">
    <property type="entry name" value="LY86"/>
</dbReference>
<dbReference type="InterPro" id="IPR003172">
    <property type="entry name" value="ML_dom"/>
</dbReference>
<dbReference type="PANTHER" id="PTHR20838">
    <property type="entry name" value="LYMPHOCYTE ANTIGEN 86"/>
    <property type="match status" value="1"/>
</dbReference>
<dbReference type="PANTHER" id="PTHR20838:SF0">
    <property type="entry name" value="LYMPHOCYTE ANTIGEN 86"/>
    <property type="match status" value="1"/>
</dbReference>
<dbReference type="Pfam" id="PF02221">
    <property type="entry name" value="E1_DerP2_DerF2"/>
    <property type="match status" value="1"/>
</dbReference>
<dbReference type="SMART" id="SM00737">
    <property type="entry name" value="ML"/>
    <property type="match status" value="1"/>
</dbReference>
<dbReference type="SUPFAM" id="SSF81296">
    <property type="entry name" value="E set domains"/>
    <property type="match status" value="1"/>
</dbReference>